<evidence type="ECO:0000255" key="1">
    <source>
        <dbReference type="HAMAP-Rule" id="MF_00412"/>
    </source>
</evidence>
<protein>
    <recommendedName>
        <fullName evidence="1">Gamma-glutamyl phosphate reductase</fullName>
        <shortName evidence="1">GPR</shortName>
        <ecNumber evidence="1">1.2.1.41</ecNumber>
    </recommendedName>
    <alternativeName>
        <fullName evidence="1">Glutamate-5-semialdehyde dehydrogenase</fullName>
    </alternativeName>
    <alternativeName>
        <fullName evidence="1">Glutamyl-gamma-semialdehyde dehydrogenase</fullName>
        <shortName evidence="1">GSA dehydrogenase</shortName>
    </alternativeName>
</protein>
<sequence length="423" mass="44261">MMTSTDLDALMTDLGQRARKAARILALTPSAAKDKALRAAAQAIRIDTKLILAANAKDMEAGEAKGLSKAMLDRLMLNPARVEAMAKGLEDIARLPDPVGRSLAEWTRPNGMSIARIAVPLGVIGIIYESRPNVTADAAALCLKSGNATILRGGSESFHSSQAILTALKGGFTACGLPADAVQMVPTTDRAAVGVMLRLSNYIDVIVPRGGKSLVERVVAESRIPLFQHLEGICHTYVDGSADLEMAKTIVLNAKMRRTGICGATETLLVDRACAGTHLAPLVAMLIDAGCEVRGDAVAQAADARVIPASDADWSTEYLDAIISVGVVDGVGAAVEHINTHGSHHTEAIVAEDSQVAETFLNGCDSAIVLWNASTQFADGGEFGMGAEIGISTGKMHARGPVGVEQLCTFKYVVKGNGQVRPG</sequence>
<comment type="function">
    <text evidence="1">Catalyzes the NADPH-dependent reduction of L-glutamate 5-phosphate into L-glutamate 5-semialdehyde and phosphate. The product spontaneously undergoes cyclization to form 1-pyrroline-5-carboxylate.</text>
</comment>
<comment type="catalytic activity">
    <reaction evidence="1">
        <text>L-glutamate 5-semialdehyde + phosphate + NADP(+) = L-glutamyl 5-phosphate + NADPH + H(+)</text>
        <dbReference type="Rhea" id="RHEA:19541"/>
        <dbReference type="ChEBI" id="CHEBI:15378"/>
        <dbReference type="ChEBI" id="CHEBI:43474"/>
        <dbReference type="ChEBI" id="CHEBI:57783"/>
        <dbReference type="ChEBI" id="CHEBI:58066"/>
        <dbReference type="ChEBI" id="CHEBI:58274"/>
        <dbReference type="ChEBI" id="CHEBI:58349"/>
        <dbReference type="EC" id="1.2.1.41"/>
    </reaction>
</comment>
<comment type="pathway">
    <text evidence="1">Amino-acid biosynthesis; L-proline biosynthesis; L-glutamate 5-semialdehyde from L-glutamate: step 2/2.</text>
</comment>
<comment type="subcellular location">
    <subcellularLocation>
        <location evidence="1">Cytoplasm</location>
    </subcellularLocation>
</comment>
<comment type="similarity">
    <text evidence="1">Belongs to the gamma-glutamyl phosphate reductase family.</text>
</comment>
<reference key="1">
    <citation type="journal article" date="2005" name="DNA Res.">
        <title>Complete genome sequence of the facultative anaerobic magnetotactic bacterium Magnetospirillum sp. strain AMB-1.</title>
        <authorList>
            <person name="Matsunaga T."/>
            <person name="Okamura Y."/>
            <person name="Fukuda Y."/>
            <person name="Wahyudi A.T."/>
            <person name="Murase Y."/>
            <person name="Takeyama H."/>
        </authorList>
    </citation>
    <scope>NUCLEOTIDE SEQUENCE [LARGE SCALE GENOMIC DNA]</scope>
    <source>
        <strain>ATCC 700264 / AMB-1</strain>
    </source>
</reference>
<name>PROA_PARM1</name>
<keyword id="KW-0028">Amino-acid biosynthesis</keyword>
<keyword id="KW-0963">Cytoplasm</keyword>
<keyword id="KW-0521">NADP</keyword>
<keyword id="KW-0560">Oxidoreductase</keyword>
<keyword id="KW-0641">Proline biosynthesis</keyword>
<accession>Q2VZT9</accession>
<proteinExistence type="inferred from homology"/>
<feature type="chain" id="PRO_0000252577" description="Gamma-glutamyl phosphate reductase">
    <location>
        <begin position="1"/>
        <end position="423"/>
    </location>
</feature>
<gene>
    <name evidence="1" type="primary">proA</name>
    <name type="ordered locus">amb4082</name>
</gene>
<organism>
    <name type="scientific">Paramagnetospirillum magneticum (strain ATCC 700264 / AMB-1)</name>
    <name type="common">Magnetospirillum magneticum</name>
    <dbReference type="NCBI Taxonomy" id="342108"/>
    <lineage>
        <taxon>Bacteria</taxon>
        <taxon>Pseudomonadati</taxon>
        <taxon>Pseudomonadota</taxon>
        <taxon>Alphaproteobacteria</taxon>
        <taxon>Rhodospirillales</taxon>
        <taxon>Magnetospirillaceae</taxon>
        <taxon>Paramagnetospirillum</taxon>
    </lineage>
</organism>
<dbReference type="EC" id="1.2.1.41" evidence="1"/>
<dbReference type="EMBL" id="AP007255">
    <property type="protein sequence ID" value="BAE52886.1"/>
    <property type="molecule type" value="Genomic_DNA"/>
</dbReference>
<dbReference type="RefSeq" id="WP_011386432.1">
    <property type="nucleotide sequence ID" value="NC_007626.1"/>
</dbReference>
<dbReference type="SMR" id="Q2VZT9"/>
<dbReference type="STRING" id="342108.amb4082"/>
<dbReference type="KEGG" id="mag:amb4082"/>
<dbReference type="HOGENOM" id="CLU_030231_0_0_5"/>
<dbReference type="OrthoDB" id="9809970at2"/>
<dbReference type="UniPathway" id="UPA00098">
    <property type="reaction ID" value="UER00360"/>
</dbReference>
<dbReference type="Proteomes" id="UP000007058">
    <property type="component" value="Chromosome"/>
</dbReference>
<dbReference type="GO" id="GO:0005737">
    <property type="term" value="C:cytoplasm"/>
    <property type="evidence" value="ECO:0007669"/>
    <property type="project" value="UniProtKB-SubCell"/>
</dbReference>
<dbReference type="GO" id="GO:0004350">
    <property type="term" value="F:glutamate-5-semialdehyde dehydrogenase activity"/>
    <property type="evidence" value="ECO:0007669"/>
    <property type="project" value="UniProtKB-UniRule"/>
</dbReference>
<dbReference type="GO" id="GO:0050661">
    <property type="term" value="F:NADP binding"/>
    <property type="evidence" value="ECO:0007669"/>
    <property type="project" value="InterPro"/>
</dbReference>
<dbReference type="GO" id="GO:0055129">
    <property type="term" value="P:L-proline biosynthetic process"/>
    <property type="evidence" value="ECO:0007669"/>
    <property type="project" value="UniProtKB-UniRule"/>
</dbReference>
<dbReference type="CDD" id="cd07079">
    <property type="entry name" value="ALDH_F18-19_ProA-GPR"/>
    <property type="match status" value="1"/>
</dbReference>
<dbReference type="FunFam" id="3.40.309.10:FF:000006">
    <property type="entry name" value="Gamma-glutamyl phosphate reductase"/>
    <property type="match status" value="1"/>
</dbReference>
<dbReference type="Gene3D" id="3.40.605.10">
    <property type="entry name" value="Aldehyde Dehydrogenase, Chain A, domain 1"/>
    <property type="match status" value="1"/>
</dbReference>
<dbReference type="Gene3D" id="3.40.309.10">
    <property type="entry name" value="Aldehyde Dehydrogenase, Chain A, domain 2"/>
    <property type="match status" value="1"/>
</dbReference>
<dbReference type="HAMAP" id="MF_00412">
    <property type="entry name" value="ProA"/>
    <property type="match status" value="1"/>
</dbReference>
<dbReference type="InterPro" id="IPR016161">
    <property type="entry name" value="Ald_DH/histidinol_DH"/>
</dbReference>
<dbReference type="InterPro" id="IPR016163">
    <property type="entry name" value="Ald_DH_C"/>
</dbReference>
<dbReference type="InterPro" id="IPR016162">
    <property type="entry name" value="Ald_DH_N"/>
</dbReference>
<dbReference type="InterPro" id="IPR015590">
    <property type="entry name" value="Aldehyde_DH_dom"/>
</dbReference>
<dbReference type="InterPro" id="IPR020593">
    <property type="entry name" value="G-glutamylP_reductase_CS"/>
</dbReference>
<dbReference type="InterPro" id="IPR012134">
    <property type="entry name" value="Glu-5-SA_DH"/>
</dbReference>
<dbReference type="InterPro" id="IPR000965">
    <property type="entry name" value="GPR_dom"/>
</dbReference>
<dbReference type="NCBIfam" id="NF001221">
    <property type="entry name" value="PRK00197.1"/>
    <property type="match status" value="1"/>
</dbReference>
<dbReference type="NCBIfam" id="TIGR00407">
    <property type="entry name" value="proA"/>
    <property type="match status" value="1"/>
</dbReference>
<dbReference type="PANTHER" id="PTHR11063:SF8">
    <property type="entry name" value="DELTA-1-PYRROLINE-5-CARBOXYLATE SYNTHASE"/>
    <property type="match status" value="1"/>
</dbReference>
<dbReference type="PANTHER" id="PTHR11063">
    <property type="entry name" value="GLUTAMATE SEMIALDEHYDE DEHYDROGENASE"/>
    <property type="match status" value="1"/>
</dbReference>
<dbReference type="Pfam" id="PF00171">
    <property type="entry name" value="Aldedh"/>
    <property type="match status" value="1"/>
</dbReference>
<dbReference type="PIRSF" id="PIRSF000151">
    <property type="entry name" value="GPR"/>
    <property type="match status" value="1"/>
</dbReference>
<dbReference type="SUPFAM" id="SSF53720">
    <property type="entry name" value="ALDH-like"/>
    <property type="match status" value="1"/>
</dbReference>
<dbReference type="PROSITE" id="PS01223">
    <property type="entry name" value="PROA"/>
    <property type="match status" value="1"/>
</dbReference>